<feature type="chain" id="PRO_1000048900" description="tRNA modification GTPase MnmE">
    <location>
        <begin position="1"/>
        <end position="459"/>
    </location>
</feature>
<feature type="domain" description="TrmE-type G">
    <location>
        <begin position="221"/>
        <end position="381"/>
    </location>
</feature>
<feature type="binding site" evidence="1">
    <location>
        <position position="22"/>
    </location>
    <ligand>
        <name>(6S)-5-formyl-5,6,7,8-tetrahydrofolate</name>
        <dbReference type="ChEBI" id="CHEBI:57457"/>
    </ligand>
</feature>
<feature type="binding site" evidence="1">
    <location>
        <position position="87"/>
    </location>
    <ligand>
        <name>(6S)-5-formyl-5,6,7,8-tetrahydrofolate</name>
        <dbReference type="ChEBI" id="CHEBI:57457"/>
    </ligand>
</feature>
<feature type="binding site" evidence="1">
    <location>
        <position position="126"/>
    </location>
    <ligand>
        <name>(6S)-5-formyl-5,6,7,8-tetrahydrofolate</name>
        <dbReference type="ChEBI" id="CHEBI:57457"/>
    </ligand>
</feature>
<feature type="binding site" evidence="1">
    <location>
        <begin position="231"/>
        <end position="236"/>
    </location>
    <ligand>
        <name>GTP</name>
        <dbReference type="ChEBI" id="CHEBI:37565"/>
    </ligand>
</feature>
<feature type="binding site" evidence="1">
    <location>
        <position position="231"/>
    </location>
    <ligand>
        <name>K(+)</name>
        <dbReference type="ChEBI" id="CHEBI:29103"/>
    </ligand>
</feature>
<feature type="binding site" evidence="1">
    <location>
        <position position="235"/>
    </location>
    <ligand>
        <name>Mg(2+)</name>
        <dbReference type="ChEBI" id="CHEBI:18420"/>
    </ligand>
</feature>
<feature type="binding site" evidence="1">
    <location>
        <begin position="250"/>
        <end position="256"/>
    </location>
    <ligand>
        <name>GTP</name>
        <dbReference type="ChEBI" id="CHEBI:37565"/>
    </ligand>
</feature>
<feature type="binding site" evidence="1">
    <location>
        <position position="250"/>
    </location>
    <ligand>
        <name>K(+)</name>
        <dbReference type="ChEBI" id="CHEBI:29103"/>
    </ligand>
</feature>
<feature type="binding site" evidence="1">
    <location>
        <position position="252"/>
    </location>
    <ligand>
        <name>K(+)</name>
        <dbReference type="ChEBI" id="CHEBI:29103"/>
    </ligand>
</feature>
<feature type="binding site" evidence="1">
    <location>
        <position position="255"/>
    </location>
    <ligand>
        <name>K(+)</name>
        <dbReference type="ChEBI" id="CHEBI:29103"/>
    </ligand>
</feature>
<feature type="binding site" evidence="1">
    <location>
        <position position="256"/>
    </location>
    <ligand>
        <name>Mg(2+)</name>
        <dbReference type="ChEBI" id="CHEBI:18420"/>
    </ligand>
</feature>
<feature type="binding site" evidence="1">
    <location>
        <begin position="275"/>
        <end position="278"/>
    </location>
    <ligand>
        <name>GTP</name>
        <dbReference type="ChEBI" id="CHEBI:37565"/>
    </ligand>
</feature>
<feature type="binding site" evidence="1">
    <location>
        <position position="459"/>
    </location>
    <ligand>
        <name>(6S)-5-formyl-5,6,7,8-tetrahydrofolate</name>
        <dbReference type="ChEBI" id="CHEBI:57457"/>
    </ligand>
</feature>
<protein>
    <recommendedName>
        <fullName evidence="1">tRNA modification GTPase MnmE</fullName>
        <ecNumber evidence="1">3.6.-.-</ecNumber>
    </recommendedName>
</protein>
<proteinExistence type="inferred from homology"/>
<name>MNME_SYNWW</name>
<comment type="function">
    <text evidence="1">Exhibits a very high intrinsic GTPase hydrolysis rate. Involved in the addition of a carboxymethylaminomethyl (cmnm) group at the wobble position (U34) of certain tRNAs, forming tRNA-cmnm(5)s(2)U34.</text>
</comment>
<comment type="cofactor">
    <cofactor evidence="1">
        <name>K(+)</name>
        <dbReference type="ChEBI" id="CHEBI:29103"/>
    </cofactor>
    <text evidence="1">Binds 1 potassium ion per subunit.</text>
</comment>
<comment type="subunit">
    <text evidence="1">Homodimer. Heterotetramer of two MnmE and two MnmG subunits.</text>
</comment>
<comment type="subcellular location">
    <subcellularLocation>
        <location evidence="1">Cytoplasm</location>
    </subcellularLocation>
</comment>
<comment type="similarity">
    <text evidence="1">Belongs to the TRAFAC class TrmE-Era-EngA-EngB-Septin-like GTPase superfamily. TrmE GTPase family.</text>
</comment>
<evidence type="ECO:0000255" key="1">
    <source>
        <dbReference type="HAMAP-Rule" id="MF_00379"/>
    </source>
</evidence>
<keyword id="KW-0963">Cytoplasm</keyword>
<keyword id="KW-0342">GTP-binding</keyword>
<keyword id="KW-0378">Hydrolase</keyword>
<keyword id="KW-0460">Magnesium</keyword>
<keyword id="KW-0479">Metal-binding</keyword>
<keyword id="KW-0547">Nucleotide-binding</keyword>
<keyword id="KW-0630">Potassium</keyword>
<keyword id="KW-1185">Reference proteome</keyword>
<keyword id="KW-0819">tRNA processing</keyword>
<dbReference type="EC" id="3.6.-.-" evidence="1"/>
<dbReference type="EMBL" id="CP000448">
    <property type="protein sequence ID" value="ABI69859.1"/>
    <property type="molecule type" value="Genomic_DNA"/>
</dbReference>
<dbReference type="RefSeq" id="WP_011641939.1">
    <property type="nucleotide sequence ID" value="NC_008346.1"/>
</dbReference>
<dbReference type="SMR" id="Q0ATU5"/>
<dbReference type="STRING" id="335541.Swol_2572"/>
<dbReference type="KEGG" id="swo:Swol_2572"/>
<dbReference type="eggNOG" id="COG0486">
    <property type="taxonomic scope" value="Bacteria"/>
</dbReference>
<dbReference type="HOGENOM" id="CLU_019624_4_1_9"/>
<dbReference type="OrthoDB" id="9805918at2"/>
<dbReference type="Proteomes" id="UP000001968">
    <property type="component" value="Chromosome"/>
</dbReference>
<dbReference type="GO" id="GO:0005829">
    <property type="term" value="C:cytosol"/>
    <property type="evidence" value="ECO:0007669"/>
    <property type="project" value="TreeGrafter"/>
</dbReference>
<dbReference type="GO" id="GO:0005525">
    <property type="term" value="F:GTP binding"/>
    <property type="evidence" value="ECO:0007669"/>
    <property type="project" value="UniProtKB-UniRule"/>
</dbReference>
<dbReference type="GO" id="GO:0003924">
    <property type="term" value="F:GTPase activity"/>
    <property type="evidence" value="ECO:0007669"/>
    <property type="project" value="UniProtKB-UniRule"/>
</dbReference>
<dbReference type="GO" id="GO:0046872">
    <property type="term" value="F:metal ion binding"/>
    <property type="evidence" value="ECO:0007669"/>
    <property type="project" value="UniProtKB-KW"/>
</dbReference>
<dbReference type="GO" id="GO:0030488">
    <property type="term" value="P:tRNA methylation"/>
    <property type="evidence" value="ECO:0007669"/>
    <property type="project" value="TreeGrafter"/>
</dbReference>
<dbReference type="GO" id="GO:0002098">
    <property type="term" value="P:tRNA wobble uridine modification"/>
    <property type="evidence" value="ECO:0007669"/>
    <property type="project" value="TreeGrafter"/>
</dbReference>
<dbReference type="CDD" id="cd04164">
    <property type="entry name" value="trmE"/>
    <property type="match status" value="1"/>
</dbReference>
<dbReference type="CDD" id="cd14858">
    <property type="entry name" value="TrmE_N"/>
    <property type="match status" value="1"/>
</dbReference>
<dbReference type="FunFam" id="3.30.1360.120:FF:000003">
    <property type="entry name" value="tRNA modification GTPase MnmE"/>
    <property type="match status" value="1"/>
</dbReference>
<dbReference type="FunFam" id="3.40.50.300:FF:000494">
    <property type="entry name" value="tRNA modification GTPase MnmE"/>
    <property type="match status" value="1"/>
</dbReference>
<dbReference type="Gene3D" id="3.40.50.300">
    <property type="entry name" value="P-loop containing nucleotide triphosphate hydrolases"/>
    <property type="match status" value="1"/>
</dbReference>
<dbReference type="Gene3D" id="3.30.1360.120">
    <property type="entry name" value="Probable tRNA modification gtpase trme, domain 1"/>
    <property type="match status" value="1"/>
</dbReference>
<dbReference type="Gene3D" id="1.20.120.430">
    <property type="entry name" value="tRNA modification GTPase MnmE domain 2"/>
    <property type="match status" value="1"/>
</dbReference>
<dbReference type="HAMAP" id="MF_00379">
    <property type="entry name" value="GTPase_MnmE"/>
    <property type="match status" value="1"/>
</dbReference>
<dbReference type="InterPro" id="IPR031168">
    <property type="entry name" value="G_TrmE"/>
</dbReference>
<dbReference type="InterPro" id="IPR006073">
    <property type="entry name" value="GTP-bd"/>
</dbReference>
<dbReference type="InterPro" id="IPR018948">
    <property type="entry name" value="GTP-bd_TrmE_N"/>
</dbReference>
<dbReference type="InterPro" id="IPR004520">
    <property type="entry name" value="GTPase_MnmE"/>
</dbReference>
<dbReference type="InterPro" id="IPR027368">
    <property type="entry name" value="MnmE_dom2"/>
</dbReference>
<dbReference type="InterPro" id="IPR025867">
    <property type="entry name" value="MnmE_helical"/>
</dbReference>
<dbReference type="InterPro" id="IPR027417">
    <property type="entry name" value="P-loop_NTPase"/>
</dbReference>
<dbReference type="InterPro" id="IPR005225">
    <property type="entry name" value="Small_GTP-bd"/>
</dbReference>
<dbReference type="InterPro" id="IPR027266">
    <property type="entry name" value="TrmE/GcvT_dom1"/>
</dbReference>
<dbReference type="NCBIfam" id="TIGR00450">
    <property type="entry name" value="mnmE_trmE_thdF"/>
    <property type="match status" value="1"/>
</dbReference>
<dbReference type="NCBIfam" id="TIGR00231">
    <property type="entry name" value="small_GTP"/>
    <property type="match status" value="1"/>
</dbReference>
<dbReference type="PANTHER" id="PTHR42714">
    <property type="entry name" value="TRNA MODIFICATION GTPASE GTPBP3"/>
    <property type="match status" value="1"/>
</dbReference>
<dbReference type="PANTHER" id="PTHR42714:SF2">
    <property type="entry name" value="TRNA MODIFICATION GTPASE GTPBP3, MITOCHONDRIAL"/>
    <property type="match status" value="1"/>
</dbReference>
<dbReference type="Pfam" id="PF01926">
    <property type="entry name" value="MMR_HSR1"/>
    <property type="match status" value="1"/>
</dbReference>
<dbReference type="Pfam" id="PF12631">
    <property type="entry name" value="MnmE_helical"/>
    <property type="match status" value="1"/>
</dbReference>
<dbReference type="Pfam" id="PF10396">
    <property type="entry name" value="TrmE_N"/>
    <property type="match status" value="1"/>
</dbReference>
<dbReference type="SUPFAM" id="SSF52540">
    <property type="entry name" value="P-loop containing nucleoside triphosphate hydrolases"/>
    <property type="match status" value="1"/>
</dbReference>
<dbReference type="PROSITE" id="PS51709">
    <property type="entry name" value="G_TRME"/>
    <property type="match status" value="1"/>
</dbReference>
<gene>
    <name evidence="1" type="primary">mnmE</name>
    <name evidence="1" type="synonym">trmE</name>
    <name type="ordered locus">Swol_2572</name>
</gene>
<reference key="1">
    <citation type="journal article" date="2010" name="Environ. Microbiol.">
        <title>The genome of Syntrophomonas wolfei: new insights into syntrophic metabolism and biohydrogen production.</title>
        <authorList>
            <person name="Sieber J.R."/>
            <person name="Sims D.R."/>
            <person name="Han C."/>
            <person name="Kim E."/>
            <person name="Lykidis A."/>
            <person name="Lapidus A.L."/>
            <person name="McDonnald E."/>
            <person name="Rohlin L."/>
            <person name="Culley D.E."/>
            <person name="Gunsalus R."/>
            <person name="McInerney M.J."/>
        </authorList>
    </citation>
    <scope>NUCLEOTIDE SEQUENCE [LARGE SCALE GENOMIC DNA]</scope>
    <source>
        <strain>DSM 2245B / Goettingen</strain>
    </source>
</reference>
<organism>
    <name type="scientific">Syntrophomonas wolfei subsp. wolfei (strain DSM 2245B / Goettingen)</name>
    <dbReference type="NCBI Taxonomy" id="335541"/>
    <lineage>
        <taxon>Bacteria</taxon>
        <taxon>Bacillati</taxon>
        <taxon>Bacillota</taxon>
        <taxon>Clostridia</taxon>
        <taxon>Eubacteriales</taxon>
        <taxon>Syntrophomonadaceae</taxon>
        <taxon>Syntrophomonas</taxon>
    </lineage>
</organism>
<sequence length="459" mass="50807">MIGDDIAAISTAPGEGGIAIVRLSGNDVIEKVERIFKPYRAGIKLSDKEGYSLSLGWLCDEKMEIIDEVLLGLMRAPRSYTGEDVVEINCHGGTLPARRCLEAVMWQGVRLAQPGEFTRRAFLNGRLDVSQAEAVIEVIRAKTERGMNLALKQLAGRNSQEINLLEDQMIEVNAMLEASLDFPDEVGDLDYSAAQGKLQEVKNRIDKLLLAGERAEIYREGINVAICGKPNVGKSSLLNALLRKEKAIVTSIPGTTRDIIEDYINIRGIPVKLKDTAGIRSTEDLVERIGIERSQEVISEADLVLFILDVGTGIDQEDRKIYEKIEKKNKIVLVNKEDLEEKNISEAELEQLFPGVKIVRGSIIEETGLEELEESIEKAVLSGQLQSDDMEVMINLRQKNALLTAKRHIEESLAAMGKVSLDCLGVDIWGALEALGEISGKNLKEEVIERIFHDFCIGK</sequence>
<accession>Q0ATU5</accession>